<evidence type="ECO:0000255" key="1">
    <source>
        <dbReference type="HAMAP-Rule" id="MF_00508"/>
    </source>
</evidence>
<evidence type="ECO:0000305" key="2"/>
<keyword id="KW-0687">Ribonucleoprotein</keyword>
<keyword id="KW-0689">Ribosomal protein</keyword>
<name>RS10_MESHJ</name>
<sequence>MNTTSIKIKLKSFDHRQIDAAAKKIILLARELNIETRGPVPLPTSRAIYTILRSVHINKKSREQFESRTHKRLVILKVLPTNQKLVTEKISRSQLPAGVWIEIEVS</sequence>
<accession>Q4AAD9</accession>
<reference key="1">
    <citation type="journal article" date="2005" name="J. Bacteriol.">
        <title>Swine and poultry pathogens: the complete genome sequences of two strains of Mycoplasma hyopneumoniae and a strain of Mycoplasma synoviae.</title>
        <authorList>
            <person name="Vasconcelos A.T.R."/>
            <person name="Ferreira H.B."/>
            <person name="Bizarro C.V."/>
            <person name="Bonatto S.L."/>
            <person name="Carvalho M.O."/>
            <person name="Pinto P.M."/>
            <person name="Almeida D.F."/>
            <person name="Almeida L.G.P."/>
            <person name="Almeida R."/>
            <person name="Alves-Junior L."/>
            <person name="Assuncao E.N."/>
            <person name="Azevedo V.A.C."/>
            <person name="Bogo M.R."/>
            <person name="Brigido M.M."/>
            <person name="Brocchi M."/>
            <person name="Burity H.A."/>
            <person name="Camargo A.A."/>
            <person name="Camargo S.S."/>
            <person name="Carepo M.S."/>
            <person name="Carraro D.M."/>
            <person name="de Mattos Cascardo J.C."/>
            <person name="Castro L.A."/>
            <person name="Cavalcanti G."/>
            <person name="Chemale G."/>
            <person name="Collevatti R.G."/>
            <person name="Cunha C.W."/>
            <person name="Dallagiovanna B."/>
            <person name="Dambros B.P."/>
            <person name="Dellagostin O.A."/>
            <person name="Falcao C."/>
            <person name="Fantinatti-Garboggini F."/>
            <person name="Felipe M.S.S."/>
            <person name="Fiorentin L."/>
            <person name="Franco G.R."/>
            <person name="Freitas N.S.A."/>
            <person name="Frias D."/>
            <person name="Grangeiro T.B."/>
            <person name="Grisard E.C."/>
            <person name="Guimaraes C.T."/>
            <person name="Hungria M."/>
            <person name="Jardim S.N."/>
            <person name="Krieger M.A."/>
            <person name="Laurino J.P."/>
            <person name="Lima L.F.A."/>
            <person name="Lopes M.I."/>
            <person name="Loreto E.L.S."/>
            <person name="Madeira H.M.F."/>
            <person name="Manfio G.P."/>
            <person name="Maranhao A.Q."/>
            <person name="Martinkovics C.T."/>
            <person name="Medeiros S.R.B."/>
            <person name="Moreira M.A.M."/>
            <person name="Neiva M."/>
            <person name="Ramalho-Neto C.E."/>
            <person name="Nicolas M.F."/>
            <person name="Oliveira S.C."/>
            <person name="Paixao R.F.C."/>
            <person name="Pedrosa F.O."/>
            <person name="Pena S.D.J."/>
            <person name="Pereira M."/>
            <person name="Pereira-Ferrari L."/>
            <person name="Piffer I."/>
            <person name="Pinto L.S."/>
            <person name="Potrich D.P."/>
            <person name="Salim A.C.M."/>
            <person name="Santos F.R."/>
            <person name="Schmitt R."/>
            <person name="Schneider M.P.C."/>
            <person name="Schrank A."/>
            <person name="Schrank I.S."/>
            <person name="Schuck A.F."/>
            <person name="Seuanez H.N."/>
            <person name="Silva D.W."/>
            <person name="Silva R."/>
            <person name="Silva S.C."/>
            <person name="Soares C.M.A."/>
            <person name="Souza K.R.L."/>
            <person name="Souza R.C."/>
            <person name="Staats C.C."/>
            <person name="Steffens M.B.R."/>
            <person name="Teixeira S.M.R."/>
            <person name="Urmenyi T.P."/>
            <person name="Vainstein M.H."/>
            <person name="Zuccherato L.W."/>
            <person name="Simpson A.J.G."/>
            <person name="Zaha A."/>
        </authorList>
    </citation>
    <scope>NUCLEOTIDE SEQUENCE [LARGE SCALE GENOMIC DNA]</scope>
    <source>
        <strain>J / ATCC 25934 / NCTC 10110</strain>
    </source>
</reference>
<comment type="function">
    <text evidence="1">Involved in the binding of tRNA to the ribosomes.</text>
</comment>
<comment type="subunit">
    <text evidence="1">Part of the 30S ribosomal subunit.</text>
</comment>
<comment type="similarity">
    <text evidence="1">Belongs to the universal ribosomal protein uS10 family.</text>
</comment>
<comment type="sequence caution" evidence="2">
    <conflict type="erroneous initiation">
        <sequence resource="EMBL-CDS" id="AAZ44282"/>
    </conflict>
</comment>
<proteinExistence type="inferred from homology"/>
<dbReference type="EMBL" id="AE017243">
    <property type="protein sequence ID" value="AAZ44282.1"/>
    <property type="status" value="ALT_INIT"/>
    <property type="molecule type" value="Genomic_DNA"/>
</dbReference>
<dbReference type="RefSeq" id="WP_014579601.1">
    <property type="nucleotide sequence ID" value="NC_007295.1"/>
</dbReference>
<dbReference type="SMR" id="Q4AAD9"/>
<dbReference type="GeneID" id="41334494"/>
<dbReference type="KEGG" id="mhj:MHJ_0191"/>
<dbReference type="eggNOG" id="COG0051">
    <property type="taxonomic scope" value="Bacteria"/>
</dbReference>
<dbReference type="HOGENOM" id="CLU_122625_1_3_14"/>
<dbReference type="OrthoDB" id="9804464at2"/>
<dbReference type="Proteomes" id="UP000000548">
    <property type="component" value="Chromosome"/>
</dbReference>
<dbReference type="GO" id="GO:1990904">
    <property type="term" value="C:ribonucleoprotein complex"/>
    <property type="evidence" value="ECO:0007669"/>
    <property type="project" value="UniProtKB-KW"/>
</dbReference>
<dbReference type="GO" id="GO:0005840">
    <property type="term" value="C:ribosome"/>
    <property type="evidence" value="ECO:0007669"/>
    <property type="project" value="UniProtKB-KW"/>
</dbReference>
<dbReference type="GO" id="GO:0003735">
    <property type="term" value="F:structural constituent of ribosome"/>
    <property type="evidence" value="ECO:0007669"/>
    <property type="project" value="InterPro"/>
</dbReference>
<dbReference type="GO" id="GO:0000049">
    <property type="term" value="F:tRNA binding"/>
    <property type="evidence" value="ECO:0007669"/>
    <property type="project" value="UniProtKB-UniRule"/>
</dbReference>
<dbReference type="GO" id="GO:0006412">
    <property type="term" value="P:translation"/>
    <property type="evidence" value="ECO:0007669"/>
    <property type="project" value="UniProtKB-UniRule"/>
</dbReference>
<dbReference type="FunFam" id="3.30.70.600:FF:000003">
    <property type="entry name" value="30S ribosomal protein S10"/>
    <property type="match status" value="1"/>
</dbReference>
<dbReference type="Gene3D" id="3.30.70.600">
    <property type="entry name" value="Ribosomal protein S10 domain"/>
    <property type="match status" value="1"/>
</dbReference>
<dbReference type="HAMAP" id="MF_00508">
    <property type="entry name" value="Ribosomal_uS10"/>
    <property type="match status" value="1"/>
</dbReference>
<dbReference type="InterPro" id="IPR001848">
    <property type="entry name" value="Ribosomal_uS10"/>
</dbReference>
<dbReference type="InterPro" id="IPR018268">
    <property type="entry name" value="Ribosomal_uS10_CS"/>
</dbReference>
<dbReference type="InterPro" id="IPR027486">
    <property type="entry name" value="Ribosomal_uS10_dom"/>
</dbReference>
<dbReference type="InterPro" id="IPR036838">
    <property type="entry name" value="Ribosomal_uS10_dom_sf"/>
</dbReference>
<dbReference type="NCBIfam" id="NF001861">
    <property type="entry name" value="PRK00596.1"/>
    <property type="match status" value="1"/>
</dbReference>
<dbReference type="NCBIfam" id="TIGR01049">
    <property type="entry name" value="rpsJ_bact"/>
    <property type="match status" value="1"/>
</dbReference>
<dbReference type="PANTHER" id="PTHR11700">
    <property type="entry name" value="30S RIBOSOMAL PROTEIN S10 FAMILY MEMBER"/>
    <property type="match status" value="1"/>
</dbReference>
<dbReference type="Pfam" id="PF00338">
    <property type="entry name" value="Ribosomal_S10"/>
    <property type="match status" value="1"/>
</dbReference>
<dbReference type="PRINTS" id="PR00971">
    <property type="entry name" value="RIBOSOMALS10"/>
</dbReference>
<dbReference type="SMART" id="SM01403">
    <property type="entry name" value="Ribosomal_S10"/>
    <property type="match status" value="1"/>
</dbReference>
<dbReference type="SUPFAM" id="SSF54999">
    <property type="entry name" value="Ribosomal protein S10"/>
    <property type="match status" value="1"/>
</dbReference>
<dbReference type="PROSITE" id="PS00361">
    <property type="entry name" value="RIBOSOMAL_S10"/>
    <property type="match status" value="1"/>
</dbReference>
<organism>
    <name type="scientific">Mesomycoplasma hyopneumoniae (strain J / ATCC 25934 / NCTC 10110)</name>
    <name type="common">Mycoplasma hyopneumoniae</name>
    <dbReference type="NCBI Taxonomy" id="262719"/>
    <lineage>
        <taxon>Bacteria</taxon>
        <taxon>Bacillati</taxon>
        <taxon>Mycoplasmatota</taxon>
        <taxon>Mycoplasmoidales</taxon>
        <taxon>Metamycoplasmataceae</taxon>
        <taxon>Mesomycoplasma</taxon>
    </lineage>
</organism>
<gene>
    <name evidence="1" type="primary">rpsJ</name>
    <name type="ordered locus">MHJ_0191</name>
</gene>
<protein>
    <recommendedName>
        <fullName evidence="1">Small ribosomal subunit protein uS10</fullName>
    </recommendedName>
    <alternativeName>
        <fullName evidence="2">30S ribosomal protein S10</fullName>
    </alternativeName>
</protein>
<feature type="chain" id="PRO_0000237064" description="Small ribosomal subunit protein uS10">
    <location>
        <begin position="1"/>
        <end position="106"/>
    </location>
</feature>